<reference key="1">
    <citation type="submission" date="2007-03" db="EMBL/GenBank/DDBJ databases">
        <title>Complete sequence of chromosome of Methanococcus maripaludis C5.</title>
        <authorList>
            <consortium name="US DOE Joint Genome Institute"/>
            <person name="Copeland A."/>
            <person name="Lucas S."/>
            <person name="Lapidus A."/>
            <person name="Barry K."/>
            <person name="Glavina del Rio T."/>
            <person name="Dalin E."/>
            <person name="Tice H."/>
            <person name="Pitluck S."/>
            <person name="Chertkov O."/>
            <person name="Brettin T."/>
            <person name="Bruce D."/>
            <person name="Han C."/>
            <person name="Detter J.C."/>
            <person name="Schmutz J."/>
            <person name="Larimer F."/>
            <person name="Land M."/>
            <person name="Hauser L."/>
            <person name="Kyrpides N."/>
            <person name="Mikhailova N."/>
            <person name="Sieprawska-Lupa M."/>
            <person name="Whitman W.B."/>
            <person name="Richardson P."/>
        </authorList>
    </citation>
    <scope>NUCLEOTIDE SEQUENCE [LARGE SCALE GENOMIC DNA]</scope>
    <source>
        <strain>C5 / ATCC BAA-1333</strain>
    </source>
</reference>
<comment type="function">
    <text evidence="1">Catalyzes a transaldol reaction between 6-deoxy-5-ketofructose 1-phosphate (DKFP) and L-aspartate semialdehyde (ASA) with an elimination of hydroxypyruvaldehyde phosphate to yield 2-amino-3,7-dideoxy-D-threo-hept-6-ulosonate (ADH). Plays a key role in an alternative pathway of the biosynthesis of 3-dehydroquinate (DHQ), which is involved in the canonical pathway for the biosynthesis of aromatic amino acids.</text>
</comment>
<comment type="catalytic activity">
    <reaction evidence="1">
        <text>1-deoxy-D-threo-hexo-2,5-diulose 6-phosphate + L-aspartate 4-semialdehyde = 2,3-dioxopropyl phosphate + 2-amino-2,3,7-trideoxy-D-lyxo-hept-6-ulosonate</text>
        <dbReference type="Rhea" id="RHEA:25952"/>
        <dbReference type="ChEBI" id="CHEBI:58859"/>
        <dbReference type="ChEBI" id="CHEBI:58860"/>
        <dbReference type="ChEBI" id="CHEBI:58861"/>
        <dbReference type="ChEBI" id="CHEBI:537519"/>
        <dbReference type="EC" id="2.2.1.10"/>
    </reaction>
</comment>
<comment type="subunit">
    <text evidence="1">Homodecamer.</text>
</comment>
<comment type="similarity">
    <text evidence="1">Belongs to the DeoC/FbaB aldolase family. ADHS subfamily.</text>
</comment>
<comment type="sequence caution" evidence="2">
    <conflict type="erroneous initiation">
        <sequence resource="EMBL-CDS" id="ABO35197"/>
    </conflict>
</comment>
<name>ADHS_METM5</name>
<feature type="chain" id="PRO_0000363664" description="2-amino-3,7-dideoxy-D-threo-hept-6-ulosonate synthase">
    <location>
        <begin position="1"/>
        <end position="272"/>
    </location>
</feature>
<feature type="active site" description="Proton acceptor" evidence="1">
    <location>
        <position position="33"/>
    </location>
</feature>
<feature type="active site" description="Proton donor" evidence="1">
    <location>
        <position position="153"/>
    </location>
</feature>
<feature type="active site" description="Schiff-base intermediate with substrate" evidence="1">
    <location>
        <position position="184"/>
    </location>
</feature>
<feature type="binding site" evidence="1">
    <location>
        <begin position="33"/>
        <end position="37"/>
    </location>
    <ligand>
        <name>1-deoxy-D-threo-hexo-2,5-diulose 6-phosphate</name>
        <dbReference type="ChEBI" id="CHEBI:58861"/>
    </ligand>
</feature>
<feature type="binding site" evidence="1">
    <location>
        <begin position="153"/>
        <end position="155"/>
    </location>
    <ligand>
        <name>1-deoxy-D-threo-hexo-2,5-diulose 6-phosphate</name>
        <dbReference type="ChEBI" id="CHEBI:58861"/>
    </ligand>
</feature>
<feature type="binding site" evidence="1">
    <location>
        <begin position="209"/>
        <end position="210"/>
    </location>
    <ligand>
        <name>1-deoxy-D-threo-hexo-2,5-diulose 6-phosphate</name>
        <dbReference type="ChEBI" id="CHEBI:58861"/>
    </ligand>
</feature>
<feature type="binding site" evidence="1">
    <location>
        <begin position="237"/>
        <end position="238"/>
    </location>
    <ligand>
        <name>1-deoxy-D-threo-hexo-2,5-diulose 6-phosphate</name>
        <dbReference type="ChEBI" id="CHEBI:58861"/>
    </ligand>
</feature>
<dbReference type="EC" id="2.2.1.10" evidence="1"/>
<dbReference type="EMBL" id="CP000609">
    <property type="protein sequence ID" value="ABO35197.1"/>
    <property type="status" value="ALT_INIT"/>
    <property type="molecule type" value="Genomic_DNA"/>
</dbReference>
<dbReference type="RefSeq" id="WP_048058462.1">
    <property type="nucleotide sequence ID" value="NC_009135.1"/>
</dbReference>
<dbReference type="SMR" id="A4FYB3"/>
<dbReference type="STRING" id="402880.MmarC5_0890"/>
<dbReference type="GeneID" id="4928772"/>
<dbReference type="KEGG" id="mmq:MmarC5_0890"/>
<dbReference type="eggNOG" id="arCOG04044">
    <property type="taxonomic scope" value="Archaea"/>
</dbReference>
<dbReference type="HOGENOM" id="CLU_057069_2_0_2"/>
<dbReference type="OrthoDB" id="50091at2157"/>
<dbReference type="Proteomes" id="UP000000253">
    <property type="component" value="Chromosome"/>
</dbReference>
<dbReference type="GO" id="GO:0004332">
    <property type="term" value="F:fructose-bisphosphate aldolase activity"/>
    <property type="evidence" value="ECO:0007669"/>
    <property type="project" value="InterPro"/>
</dbReference>
<dbReference type="GO" id="GO:0016836">
    <property type="term" value="F:hydro-lyase activity"/>
    <property type="evidence" value="ECO:0007669"/>
    <property type="project" value="InterPro"/>
</dbReference>
<dbReference type="GO" id="GO:0016744">
    <property type="term" value="F:transketolase or transaldolase activity"/>
    <property type="evidence" value="ECO:0007669"/>
    <property type="project" value="UniProtKB-UniRule"/>
</dbReference>
<dbReference type="GO" id="GO:0008652">
    <property type="term" value="P:amino acid biosynthetic process"/>
    <property type="evidence" value="ECO:0007669"/>
    <property type="project" value="UniProtKB-KW"/>
</dbReference>
<dbReference type="GO" id="GO:0009073">
    <property type="term" value="P:aromatic amino acid family biosynthetic process"/>
    <property type="evidence" value="ECO:0007669"/>
    <property type="project" value="UniProtKB-UniRule"/>
</dbReference>
<dbReference type="CDD" id="cd00958">
    <property type="entry name" value="DhnA"/>
    <property type="match status" value="1"/>
</dbReference>
<dbReference type="Gene3D" id="3.20.20.70">
    <property type="entry name" value="Aldolase class I"/>
    <property type="match status" value="1"/>
</dbReference>
<dbReference type="HAMAP" id="MF_00960">
    <property type="entry name" value="ADH_synthase"/>
    <property type="match status" value="1"/>
</dbReference>
<dbReference type="InterPro" id="IPR010210">
    <property type="entry name" value="ADH_synthase"/>
</dbReference>
<dbReference type="InterPro" id="IPR013785">
    <property type="entry name" value="Aldolase_TIM"/>
</dbReference>
<dbReference type="InterPro" id="IPR002915">
    <property type="entry name" value="DeoC/FbaB/LacD_aldolase"/>
</dbReference>
<dbReference type="InterPro" id="IPR050456">
    <property type="entry name" value="DeoC/FbaB_aldolase"/>
</dbReference>
<dbReference type="InterPro" id="IPR041720">
    <property type="entry name" value="FbaB-like"/>
</dbReference>
<dbReference type="NCBIfam" id="TIGR01949">
    <property type="entry name" value="ADH_synth"/>
    <property type="match status" value="1"/>
</dbReference>
<dbReference type="NCBIfam" id="NF005556">
    <property type="entry name" value="PRK07226.1"/>
    <property type="match status" value="1"/>
</dbReference>
<dbReference type="PANTHER" id="PTHR47916:SF1">
    <property type="entry name" value="3-HYDROXY-5-PHOSPHONOOXYPENTANE-2,4-DIONE THIOLASE"/>
    <property type="match status" value="1"/>
</dbReference>
<dbReference type="PANTHER" id="PTHR47916">
    <property type="entry name" value="FRUCTOSE-BISPHOSPHATE ALDOLASE CLASS 1"/>
    <property type="match status" value="1"/>
</dbReference>
<dbReference type="Pfam" id="PF01791">
    <property type="entry name" value="DeoC"/>
    <property type="match status" value="1"/>
</dbReference>
<dbReference type="PIRSF" id="PIRSF038992">
    <property type="entry name" value="Aldolase_Ia"/>
    <property type="match status" value="1"/>
</dbReference>
<dbReference type="SMART" id="SM01133">
    <property type="entry name" value="DeoC"/>
    <property type="match status" value="1"/>
</dbReference>
<dbReference type="SUPFAM" id="SSF51569">
    <property type="entry name" value="Aldolase"/>
    <property type="match status" value="1"/>
</dbReference>
<keyword id="KW-0028">Amino-acid biosynthesis</keyword>
<keyword id="KW-0057">Aromatic amino acid biosynthesis</keyword>
<keyword id="KW-0704">Schiff base</keyword>
<keyword id="KW-0808">Transferase</keyword>
<gene>
    <name evidence="1" type="primary">aroA'</name>
    <name type="ordered locus">MmarC5_0890</name>
</gene>
<protein>
    <recommendedName>
        <fullName evidence="1">2-amino-3,7-dideoxy-D-threo-hept-6-ulosonate synthase</fullName>
        <shortName evidence="1">ADH synthase</shortName>
        <shortName evidence="1">ADHS</shortName>
        <shortName evidence="1">ADTH synthase</shortName>
        <ecNumber evidence="1">2.2.1.10</ecNumber>
    </recommendedName>
</protein>
<organism>
    <name type="scientific">Methanococcus maripaludis (strain C5 / ATCC BAA-1333)</name>
    <dbReference type="NCBI Taxonomy" id="402880"/>
    <lineage>
        <taxon>Archaea</taxon>
        <taxon>Methanobacteriati</taxon>
        <taxon>Methanobacteriota</taxon>
        <taxon>Methanomada group</taxon>
        <taxon>Methanococci</taxon>
        <taxon>Methanococcales</taxon>
        <taxon>Methanococcaceae</taxon>
        <taxon>Methanococcus</taxon>
    </lineage>
</organism>
<evidence type="ECO:0000255" key="1">
    <source>
        <dbReference type="HAMAP-Rule" id="MF_00960"/>
    </source>
</evidence>
<evidence type="ECO:0000305" key="2"/>
<proteinExistence type="inferred from homology"/>
<accession>A4FYB3</accession>
<sequence length="272" mass="29343">MKMFDNIKNVGKLIRLERIFDKKSEKTVIIPMDHGVSSGPLDGIKDMRITTNAVADGGANAVLGHKGLVRHGHRGYGRDIGLIIHMSAGTSISPDPNKKVIVTTVEDAIRLGADAVSLHVNVGAESDFEMYRDLGLISETCEQWGMPLIAMMYPRGPKIKDEKDPEVVAHAARLGAELGADIIKTNYTGDPDTFKEVVKGCPAPIVIAGGPKTNTDEEFLQMVKDAMHAGGKGVASGRNVFQHKDVKGITSAICKIVHEDAEVKEALKEIKI</sequence>